<evidence type="ECO:0000255" key="1">
    <source>
        <dbReference type="HAMAP-Rule" id="MF_00115"/>
    </source>
</evidence>
<protein>
    <recommendedName>
        <fullName evidence="1">Large-conductance mechanosensitive channel</fullName>
    </recommendedName>
</protein>
<gene>
    <name evidence="1" type="primary">mscL</name>
    <name type="ordered locus">CTC_00429</name>
</gene>
<keyword id="KW-1003">Cell membrane</keyword>
<keyword id="KW-0407">Ion channel</keyword>
<keyword id="KW-0406">Ion transport</keyword>
<keyword id="KW-0472">Membrane</keyword>
<keyword id="KW-1185">Reference proteome</keyword>
<keyword id="KW-0812">Transmembrane</keyword>
<keyword id="KW-1133">Transmembrane helix</keyword>
<keyword id="KW-0813">Transport</keyword>
<dbReference type="EMBL" id="AE015927">
    <property type="protein sequence ID" value="AAO35063.1"/>
    <property type="molecule type" value="Genomic_DNA"/>
</dbReference>
<dbReference type="RefSeq" id="WP_011098734.1">
    <property type="nucleotide sequence ID" value="NC_004557.1"/>
</dbReference>
<dbReference type="SMR" id="Q898L6"/>
<dbReference type="STRING" id="212717.CTC_00429"/>
<dbReference type="GeneID" id="24253340"/>
<dbReference type="KEGG" id="ctc:CTC_00429"/>
<dbReference type="HOGENOM" id="CLU_095787_0_0_9"/>
<dbReference type="OrthoDB" id="9810350at2"/>
<dbReference type="Proteomes" id="UP000001412">
    <property type="component" value="Chromosome"/>
</dbReference>
<dbReference type="GO" id="GO:0005886">
    <property type="term" value="C:plasma membrane"/>
    <property type="evidence" value="ECO:0007669"/>
    <property type="project" value="UniProtKB-SubCell"/>
</dbReference>
<dbReference type="GO" id="GO:0008381">
    <property type="term" value="F:mechanosensitive monoatomic ion channel activity"/>
    <property type="evidence" value="ECO:0007669"/>
    <property type="project" value="UniProtKB-UniRule"/>
</dbReference>
<dbReference type="FunFam" id="1.10.1200.120:FF:000001">
    <property type="entry name" value="Large-conductance mechanosensitive channel"/>
    <property type="match status" value="1"/>
</dbReference>
<dbReference type="Gene3D" id="1.10.1200.120">
    <property type="entry name" value="Large-conductance mechanosensitive channel, MscL, domain 1"/>
    <property type="match status" value="1"/>
</dbReference>
<dbReference type="HAMAP" id="MF_00115">
    <property type="entry name" value="MscL"/>
    <property type="match status" value="1"/>
</dbReference>
<dbReference type="InterPro" id="IPR001185">
    <property type="entry name" value="MS_channel"/>
</dbReference>
<dbReference type="InterPro" id="IPR037673">
    <property type="entry name" value="MSC/AndL"/>
</dbReference>
<dbReference type="InterPro" id="IPR036019">
    <property type="entry name" value="MscL_channel"/>
</dbReference>
<dbReference type="NCBIfam" id="TIGR00220">
    <property type="entry name" value="mscL"/>
    <property type="match status" value="1"/>
</dbReference>
<dbReference type="NCBIfam" id="NF001843">
    <property type="entry name" value="PRK00567.1-4"/>
    <property type="match status" value="1"/>
</dbReference>
<dbReference type="PANTHER" id="PTHR30266:SF2">
    <property type="entry name" value="LARGE-CONDUCTANCE MECHANOSENSITIVE CHANNEL"/>
    <property type="match status" value="1"/>
</dbReference>
<dbReference type="PANTHER" id="PTHR30266">
    <property type="entry name" value="MECHANOSENSITIVE CHANNEL MSCL"/>
    <property type="match status" value="1"/>
</dbReference>
<dbReference type="Pfam" id="PF01741">
    <property type="entry name" value="MscL"/>
    <property type="match status" value="1"/>
</dbReference>
<dbReference type="PRINTS" id="PR01264">
    <property type="entry name" value="MECHCHANNEL"/>
</dbReference>
<dbReference type="SUPFAM" id="SSF81330">
    <property type="entry name" value="Gated mechanosensitive channel"/>
    <property type="match status" value="1"/>
</dbReference>
<sequence>MFKDVVEEFKKFAIKGNAIDLAVGVVIGGAFGKIVTSLVQDIIMPAVGLLLGKVNFKTLSLTVTSIDGSEIVLKYGQFIQSVVDFIIISFSIFLFVKLINSFKKKEEEKPKVEEPSKEEKLLAEIRDILKESK</sequence>
<organism>
    <name type="scientific">Clostridium tetani (strain Massachusetts / E88)</name>
    <dbReference type="NCBI Taxonomy" id="212717"/>
    <lineage>
        <taxon>Bacteria</taxon>
        <taxon>Bacillati</taxon>
        <taxon>Bacillota</taxon>
        <taxon>Clostridia</taxon>
        <taxon>Eubacteriales</taxon>
        <taxon>Clostridiaceae</taxon>
        <taxon>Clostridium</taxon>
    </lineage>
</organism>
<reference key="1">
    <citation type="journal article" date="2003" name="Proc. Natl. Acad. Sci. U.S.A.">
        <title>The genome sequence of Clostridium tetani, the causative agent of tetanus disease.</title>
        <authorList>
            <person name="Brueggemann H."/>
            <person name="Baeumer S."/>
            <person name="Fricke W.F."/>
            <person name="Wiezer A."/>
            <person name="Liesegang H."/>
            <person name="Decker I."/>
            <person name="Herzberg C."/>
            <person name="Martinez-Arias R."/>
            <person name="Merkl R."/>
            <person name="Henne A."/>
            <person name="Gottschalk G."/>
        </authorList>
    </citation>
    <scope>NUCLEOTIDE SEQUENCE [LARGE SCALE GENOMIC DNA]</scope>
    <source>
        <strain>Massachusetts / E88</strain>
    </source>
</reference>
<name>MSCL_CLOTE</name>
<feature type="chain" id="PRO_0000237995" description="Large-conductance mechanosensitive channel">
    <location>
        <begin position="1"/>
        <end position="133"/>
    </location>
</feature>
<feature type="transmembrane region" description="Helical" evidence="1">
    <location>
        <begin position="19"/>
        <end position="39"/>
    </location>
</feature>
<feature type="transmembrane region" description="Helical" evidence="1">
    <location>
        <begin position="79"/>
        <end position="99"/>
    </location>
</feature>
<comment type="function">
    <text evidence="1">Channel that opens in response to stretch forces in the membrane lipid bilayer. May participate in the regulation of osmotic pressure changes within the cell.</text>
</comment>
<comment type="subunit">
    <text evidence="1">Homopentamer.</text>
</comment>
<comment type="subcellular location">
    <subcellularLocation>
        <location evidence="1">Cell membrane</location>
        <topology evidence="1">Multi-pass membrane protein</topology>
    </subcellularLocation>
</comment>
<comment type="similarity">
    <text evidence="1">Belongs to the MscL family.</text>
</comment>
<accession>Q898L6</accession>
<proteinExistence type="inferred from homology"/>